<dbReference type="EC" id="4.1.1.85" evidence="1"/>
<dbReference type="EMBL" id="AL513382">
    <property type="protein sequence ID" value="CAD06863.1"/>
    <property type="molecule type" value="Genomic_DNA"/>
</dbReference>
<dbReference type="EMBL" id="AE014613">
    <property type="protein sequence ID" value="AAO71884.1"/>
    <property type="molecule type" value="Genomic_DNA"/>
</dbReference>
<dbReference type="RefSeq" id="NP_458820.1">
    <property type="nucleotide sequence ID" value="NC_003198.1"/>
</dbReference>
<dbReference type="RefSeq" id="WP_000056755.1">
    <property type="nucleotide sequence ID" value="NZ_WSUR01000012.1"/>
</dbReference>
<dbReference type="SMR" id="Q8Z169"/>
<dbReference type="STRING" id="220341.gene:17588563"/>
<dbReference type="KEGG" id="stt:t4437"/>
<dbReference type="KEGG" id="sty:STY4742"/>
<dbReference type="PATRIC" id="fig|220341.7.peg.4843"/>
<dbReference type="eggNOG" id="COG0269">
    <property type="taxonomic scope" value="Bacteria"/>
</dbReference>
<dbReference type="HOGENOM" id="CLU_081825_0_0_6"/>
<dbReference type="OMA" id="WEQAQEW"/>
<dbReference type="OrthoDB" id="43475at2"/>
<dbReference type="UniPathway" id="UPA00263">
    <property type="reaction ID" value="UER00378"/>
</dbReference>
<dbReference type="Proteomes" id="UP000000541">
    <property type="component" value="Chromosome"/>
</dbReference>
<dbReference type="Proteomes" id="UP000002670">
    <property type="component" value="Chromosome"/>
</dbReference>
<dbReference type="GO" id="GO:0033982">
    <property type="term" value="F:3-dehydro-L-gulonate-6-phosphate decarboxylase activity"/>
    <property type="evidence" value="ECO:0007669"/>
    <property type="project" value="UniProtKB-EC"/>
</dbReference>
<dbReference type="GO" id="GO:0000287">
    <property type="term" value="F:magnesium ion binding"/>
    <property type="evidence" value="ECO:0007669"/>
    <property type="project" value="UniProtKB-UniRule"/>
</dbReference>
<dbReference type="GO" id="GO:0004590">
    <property type="term" value="F:orotidine-5'-phosphate decarboxylase activity"/>
    <property type="evidence" value="ECO:0007669"/>
    <property type="project" value="InterPro"/>
</dbReference>
<dbReference type="GO" id="GO:0006207">
    <property type="term" value="P:'de novo' pyrimidine nucleobase biosynthetic process"/>
    <property type="evidence" value="ECO:0007669"/>
    <property type="project" value="InterPro"/>
</dbReference>
<dbReference type="GO" id="GO:0019854">
    <property type="term" value="P:L-ascorbic acid catabolic process"/>
    <property type="evidence" value="ECO:0007669"/>
    <property type="project" value="UniProtKB-UniRule"/>
</dbReference>
<dbReference type="CDD" id="cd04726">
    <property type="entry name" value="KGPDC_HPS"/>
    <property type="match status" value="1"/>
</dbReference>
<dbReference type="FunFam" id="3.20.20.70:FF:000022">
    <property type="entry name" value="3-keto-L-gulonate-6-phosphate decarboxylase UlaD"/>
    <property type="match status" value="1"/>
</dbReference>
<dbReference type="Gene3D" id="3.20.20.70">
    <property type="entry name" value="Aldolase class I"/>
    <property type="match status" value="1"/>
</dbReference>
<dbReference type="HAMAP" id="MF_01267">
    <property type="entry name" value="UlaD"/>
    <property type="match status" value="1"/>
</dbReference>
<dbReference type="InterPro" id="IPR023942">
    <property type="entry name" value="3-keto-L-gulonate6Pdecase_UlaD"/>
</dbReference>
<dbReference type="InterPro" id="IPR013785">
    <property type="entry name" value="Aldolase_TIM"/>
</dbReference>
<dbReference type="InterPro" id="IPR041710">
    <property type="entry name" value="HPS/KGPDC"/>
</dbReference>
<dbReference type="InterPro" id="IPR001754">
    <property type="entry name" value="OMPdeCOase_dom"/>
</dbReference>
<dbReference type="InterPro" id="IPR011060">
    <property type="entry name" value="RibuloseP-bd_barrel"/>
</dbReference>
<dbReference type="NCBIfam" id="NF009832">
    <property type="entry name" value="PRK13306.1"/>
    <property type="match status" value="1"/>
</dbReference>
<dbReference type="PANTHER" id="PTHR35039">
    <property type="entry name" value="3-KETO-L-GULONATE-6-PHOSPHATE DECARBOXYLASE SGBH-RELATED"/>
    <property type="match status" value="1"/>
</dbReference>
<dbReference type="PANTHER" id="PTHR35039:SF3">
    <property type="entry name" value="3-KETO-L-GULONATE-6-PHOSPHATE DECARBOXYLASE SGBH-RELATED"/>
    <property type="match status" value="1"/>
</dbReference>
<dbReference type="Pfam" id="PF00215">
    <property type="entry name" value="OMPdecase"/>
    <property type="match status" value="1"/>
</dbReference>
<dbReference type="SMART" id="SM00934">
    <property type="entry name" value="OMPdecase"/>
    <property type="match status" value="1"/>
</dbReference>
<dbReference type="SUPFAM" id="SSF51366">
    <property type="entry name" value="Ribulose-phoshate binding barrel"/>
    <property type="match status" value="1"/>
</dbReference>
<comment type="function">
    <text evidence="1">Catalyzes the decarboxylation of 3-keto-L-gulonate-6-P into L-xylulose-5-P. Is involved in the anaerobic L-ascorbate utilization.</text>
</comment>
<comment type="catalytic activity">
    <reaction evidence="1">
        <text>3-dehydro-L-gulonate 6-phosphate + H(+) = L-xylulose 5-phosphate + CO2</text>
        <dbReference type="Rhea" id="RHEA:14353"/>
        <dbReference type="ChEBI" id="CHEBI:15378"/>
        <dbReference type="ChEBI" id="CHEBI:16526"/>
        <dbReference type="ChEBI" id="CHEBI:57829"/>
        <dbReference type="ChEBI" id="CHEBI:58774"/>
        <dbReference type="EC" id="4.1.1.85"/>
    </reaction>
</comment>
<comment type="cofactor">
    <cofactor evidence="1">
        <name>Mg(2+)</name>
        <dbReference type="ChEBI" id="CHEBI:18420"/>
    </cofactor>
    <text evidence="1">Binds 1 Mg(2+) ion per subunit.</text>
</comment>
<comment type="pathway">
    <text evidence="1">Cofactor degradation; L-ascorbate degradation; D-xylulose 5-phosphate from L-ascorbate: step 2/4.</text>
</comment>
<comment type="subunit">
    <text evidence="1">Homodimer.</text>
</comment>
<comment type="induction">
    <text evidence="1">Induced by L-ascorbate. Repressed by UlaR.</text>
</comment>
<comment type="similarity">
    <text evidence="1">Belongs to the HPS/KGPDC family. KGPDC subfamily.</text>
</comment>
<sequence>MSLPMLQVALDNQTMDSAYETTRLIAEEVDIIEVGTILCVGEGVRAVRDLKALYPHKIVLADAKIADAGKILSRMCFEANADWVTVICCADINTAKGALDVAKEFNGDVQIELTGYWTWEQAQQWRDAGIQQVVYHRSCDAQAAGVAWGEADITAIKRLSDMGFKVTVTGGLALEDLPLFKGIPIHVFIAGRSIRDAESPVEAARQFKRSIAQLWG</sequence>
<proteinExistence type="inferred from homology"/>
<name>ULAD_SALTI</name>
<reference key="1">
    <citation type="journal article" date="2001" name="Nature">
        <title>Complete genome sequence of a multiple drug resistant Salmonella enterica serovar Typhi CT18.</title>
        <authorList>
            <person name="Parkhill J."/>
            <person name="Dougan G."/>
            <person name="James K.D."/>
            <person name="Thomson N.R."/>
            <person name="Pickard D."/>
            <person name="Wain J."/>
            <person name="Churcher C.M."/>
            <person name="Mungall K.L."/>
            <person name="Bentley S.D."/>
            <person name="Holden M.T.G."/>
            <person name="Sebaihia M."/>
            <person name="Baker S."/>
            <person name="Basham D."/>
            <person name="Brooks K."/>
            <person name="Chillingworth T."/>
            <person name="Connerton P."/>
            <person name="Cronin A."/>
            <person name="Davis P."/>
            <person name="Davies R.M."/>
            <person name="Dowd L."/>
            <person name="White N."/>
            <person name="Farrar J."/>
            <person name="Feltwell T."/>
            <person name="Hamlin N."/>
            <person name="Haque A."/>
            <person name="Hien T.T."/>
            <person name="Holroyd S."/>
            <person name="Jagels K."/>
            <person name="Krogh A."/>
            <person name="Larsen T.S."/>
            <person name="Leather S."/>
            <person name="Moule S."/>
            <person name="O'Gaora P."/>
            <person name="Parry C."/>
            <person name="Quail M.A."/>
            <person name="Rutherford K.M."/>
            <person name="Simmonds M."/>
            <person name="Skelton J."/>
            <person name="Stevens K."/>
            <person name="Whitehead S."/>
            <person name="Barrell B.G."/>
        </authorList>
    </citation>
    <scope>NUCLEOTIDE SEQUENCE [LARGE SCALE GENOMIC DNA]</scope>
    <source>
        <strain>CT18</strain>
    </source>
</reference>
<reference key="2">
    <citation type="journal article" date="2003" name="J. Bacteriol.">
        <title>Comparative genomics of Salmonella enterica serovar Typhi strains Ty2 and CT18.</title>
        <authorList>
            <person name="Deng W."/>
            <person name="Liou S.-R."/>
            <person name="Plunkett G. III"/>
            <person name="Mayhew G.F."/>
            <person name="Rose D.J."/>
            <person name="Burland V."/>
            <person name="Kodoyianni V."/>
            <person name="Schwartz D.C."/>
            <person name="Blattner F.R."/>
        </authorList>
    </citation>
    <scope>NUCLEOTIDE SEQUENCE [LARGE SCALE GENOMIC DNA]</scope>
    <source>
        <strain>ATCC 700931 / Ty2</strain>
    </source>
</reference>
<accession>Q8Z169</accession>
<accession>Q7C544</accession>
<protein>
    <recommendedName>
        <fullName evidence="1">3-keto-L-gulonate-6-phosphate decarboxylase UlaD</fullName>
        <ecNumber evidence="1">4.1.1.85</ecNumber>
    </recommendedName>
    <alternativeName>
        <fullName evidence="1">3-dehydro-L-gulonate-6-phosphate decarboxylase</fullName>
    </alternativeName>
    <alternativeName>
        <fullName evidence="1">KGPDC</fullName>
    </alternativeName>
    <alternativeName>
        <fullName evidence="1">L-ascorbate utilization protein D</fullName>
    </alternativeName>
</protein>
<evidence type="ECO:0000255" key="1">
    <source>
        <dbReference type="HAMAP-Rule" id="MF_01267"/>
    </source>
</evidence>
<keyword id="KW-0119">Carbohydrate metabolism</keyword>
<keyword id="KW-0210">Decarboxylase</keyword>
<keyword id="KW-0456">Lyase</keyword>
<keyword id="KW-0460">Magnesium</keyword>
<keyword id="KW-0479">Metal-binding</keyword>
<gene>
    <name evidence="1" type="primary">ulaD</name>
    <name type="ordered locus">STY4742</name>
    <name type="ordered locus">t4437</name>
</gene>
<feature type="chain" id="PRO_0000236093" description="3-keto-L-gulonate-6-phosphate decarboxylase UlaD">
    <location>
        <begin position="1"/>
        <end position="216"/>
    </location>
</feature>
<feature type="binding site" evidence="1">
    <location>
        <position position="11"/>
    </location>
    <ligand>
        <name>substrate</name>
    </ligand>
</feature>
<feature type="binding site" evidence="1">
    <location>
        <position position="33"/>
    </location>
    <ligand>
        <name>Mg(2+)</name>
        <dbReference type="ChEBI" id="CHEBI:18420"/>
    </ligand>
</feature>
<feature type="binding site" evidence="1">
    <location>
        <position position="62"/>
    </location>
    <ligand>
        <name>Mg(2+)</name>
        <dbReference type="ChEBI" id="CHEBI:18420"/>
    </ligand>
</feature>
<feature type="binding site" evidence="1">
    <location>
        <position position="192"/>
    </location>
    <ligand>
        <name>substrate</name>
    </ligand>
</feature>
<feature type="site" description="Transition state stabilizer" evidence="1">
    <location>
        <position position="64"/>
    </location>
</feature>
<feature type="site" description="Transition state stabilizer" evidence="1">
    <location>
        <position position="67"/>
    </location>
</feature>
<organism>
    <name type="scientific">Salmonella typhi</name>
    <dbReference type="NCBI Taxonomy" id="90370"/>
    <lineage>
        <taxon>Bacteria</taxon>
        <taxon>Pseudomonadati</taxon>
        <taxon>Pseudomonadota</taxon>
        <taxon>Gammaproteobacteria</taxon>
        <taxon>Enterobacterales</taxon>
        <taxon>Enterobacteriaceae</taxon>
        <taxon>Salmonella</taxon>
    </lineage>
</organism>